<comment type="function">
    <text evidence="1">Catalyzes the isomerization between 2-isopropylmalate and 3-isopropylmalate, via the formation of 2-isopropylmaleate.</text>
</comment>
<comment type="catalytic activity">
    <reaction evidence="1">
        <text>(2R,3S)-3-isopropylmalate = (2S)-2-isopropylmalate</text>
        <dbReference type="Rhea" id="RHEA:32287"/>
        <dbReference type="ChEBI" id="CHEBI:1178"/>
        <dbReference type="ChEBI" id="CHEBI:35121"/>
        <dbReference type="EC" id="4.2.1.33"/>
    </reaction>
</comment>
<comment type="cofactor">
    <cofactor evidence="1">
        <name>[4Fe-4S] cluster</name>
        <dbReference type="ChEBI" id="CHEBI:49883"/>
    </cofactor>
    <text evidence="1">Binds 1 [4Fe-4S] cluster per subunit.</text>
</comment>
<comment type="pathway">
    <text evidence="1">Amino-acid biosynthesis; L-leucine biosynthesis; L-leucine from 3-methyl-2-oxobutanoate: step 2/4.</text>
</comment>
<comment type="subunit">
    <text evidence="1">Heterodimer of LeuC and LeuD.</text>
</comment>
<comment type="similarity">
    <text evidence="1">Belongs to the aconitase/IPM isomerase family. LeuC type 1 subfamily.</text>
</comment>
<protein>
    <recommendedName>
        <fullName evidence="1">3-isopropylmalate dehydratase large subunit</fullName>
        <ecNumber evidence="1">4.2.1.33</ecNumber>
    </recommendedName>
    <alternativeName>
        <fullName evidence="1">Alpha-IPM isomerase</fullName>
        <shortName evidence="1">IPMI</shortName>
    </alternativeName>
    <alternativeName>
        <fullName evidence="1">Isopropylmalate isomerase</fullName>
    </alternativeName>
</protein>
<evidence type="ECO:0000255" key="1">
    <source>
        <dbReference type="HAMAP-Rule" id="MF_01026"/>
    </source>
</evidence>
<dbReference type="EC" id="4.2.1.33" evidence="1"/>
<dbReference type="EMBL" id="CP001164">
    <property type="protein sequence ID" value="ACI36136.1"/>
    <property type="molecule type" value="Genomic_DNA"/>
</dbReference>
<dbReference type="RefSeq" id="WP_001140649.1">
    <property type="nucleotide sequence ID" value="NC_011353.1"/>
</dbReference>
<dbReference type="SMR" id="B5YZA8"/>
<dbReference type="KEGG" id="ecf:ECH74115_0079"/>
<dbReference type="HOGENOM" id="CLU_006714_3_4_6"/>
<dbReference type="UniPathway" id="UPA00048">
    <property type="reaction ID" value="UER00071"/>
</dbReference>
<dbReference type="GO" id="GO:0003861">
    <property type="term" value="F:3-isopropylmalate dehydratase activity"/>
    <property type="evidence" value="ECO:0007669"/>
    <property type="project" value="UniProtKB-UniRule"/>
</dbReference>
<dbReference type="GO" id="GO:0051539">
    <property type="term" value="F:4 iron, 4 sulfur cluster binding"/>
    <property type="evidence" value="ECO:0007669"/>
    <property type="project" value="UniProtKB-KW"/>
</dbReference>
<dbReference type="GO" id="GO:0046872">
    <property type="term" value="F:metal ion binding"/>
    <property type="evidence" value="ECO:0007669"/>
    <property type="project" value="UniProtKB-KW"/>
</dbReference>
<dbReference type="GO" id="GO:0009098">
    <property type="term" value="P:L-leucine biosynthetic process"/>
    <property type="evidence" value="ECO:0007669"/>
    <property type="project" value="UniProtKB-UniRule"/>
</dbReference>
<dbReference type="CDD" id="cd01583">
    <property type="entry name" value="IPMI"/>
    <property type="match status" value="1"/>
</dbReference>
<dbReference type="FunFam" id="3.30.499.10:FF:000006">
    <property type="entry name" value="3-isopropylmalate dehydratase large subunit"/>
    <property type="match status" value="1"/>
</dbReference>
<dbReference type="FunFam" id="3.30.499.10:FF:000007">
    <property type="entry name" value="3-isopropylmalate dehydratase large subunit"/>
    <property type="match status" value="1"/>
</dbReference>
<dbReference type="Gene3D" id="3.30.499.10">
    <property type="entry name" value="Aconitase, domain 3"/>
    <property type="match status" value="2"/>
</dbReference>
<dbReference type="HAMAP" id="MF_01026">
    <property type="entry name" value="LeuC_type1"/>
    <property type="match status" value="1"/>
</dbReference>
<dbReference type="InterPro" id="IPR004430">
    <property type="entry name" value="3-IsopropMal_deHydase_lsu"/>
</dbReference>
<dbReference type="InterPro" id="IPR015931">
    <property type="entry name" value="Acnase/IPM_dHydase_lsu_aba_1/3"/>
</dbReference>
<dbReference type="InterPro" id="IPR001030">
    <property type="entry name" value="Acoase/IPM_deHydtase_lsu_aba"/>
</dbReference>
<dbReference type="InterPro" id="IPR018136">
    <property type="entry name" value="Aconitase_4Fe-4S_BS"/>
</dbReference>
<dbReference type="InterPro" id="IPR036008">
    <property type="entry name" value="Aconitase_4Fe-4S_dom"/>
</dbReference>
<dbReference type="InterPro" id="IPR050067">
    <property type="entry name" value="IPM_dehydratase_rel_enz"/>
</dbReference>
<dbReference type="InterPro" id="IPR033941">
    <property type="entry name" value="IPMI_cat"/>
</dbReference>
<dbReference type="NCBIfam" id="TIGR00170">
    <property type="entry name" value="leuC"/>
    <property type="match status" value="1"/>
</dbReference>
<dbReference type="NCBIfam" id="NF004016">
    <property type="entry name" value="PRK05478.1"/>
    <property type="match status" value="1"/>
</dbReference>
<dbReference type="NCBIfam" id="NF009116">
    <property type="entry name" value="PRK12466.1"/>
    <property type="match status" value="1"/>
</dbReference>
<dbReference type="PANTHER" id="PTHR43822:SF9">
    <property type="entry name" value="3-ISOPROPYLMALATE DEHYDRATASE"/>
    <property type="match status" value="1"/>
</dbReference>
<dbReference type="PANTHER" id="PTHR43822">
    <property type="entry name" value="HOMOACONITASE, MITOCHONDRIAL-RELATED"/>
    <property type="match status" value="1"/>
</dbReference>
<dbReference type="Pfam" id="PF00330">
    <property type="entry name" value="Aconitase"/>
    <property type="match status" value="1"/>
</dbReference>
<dbReference type="PRINTS" id="PR00415">
    <property type="entry name" value="ACONITASE"/>
</dbReference>
<dbReference type="SUPFAM" id="SSF53732">
    <property type="entry name" value="Aconitase iron-sulfur domain"/>
    <property type="match status" value="1"/>
</dbReference>
<dbReference type="PROSITE" id="PS00450">
    <property type="entry name" value="ACONITASE_1"/>
    <property type="match status" value="1"/>
</dbReference>
<dbReference type="PROSITE" id="PS01244">
    <property type="entry name" value="ACONITASE_2"/>
    <property type="match status" value="1"/>
</dbReference>
<reference key="1">
    <citation type="journal article" date="2011" name="Proc. Natl. Acad. Sci. U.S.A.">
        <title>Genomic anatomy of Escherichia coli O157:H7 outbreaks.</title>
        <authorList>
            <person name="Eppinger M."/>
            <person name="Mammel M.K."/>
            <person name="Leclerc J.E."/>
            <person name="Ravel J."/>
            <person name="Cebula T.A."/>
        </authorList>
    </citation>
    <scope>NUCLEOTIDE SEQUENCE [LARGE SCALE GENOMIC DNA]</scope>
    <source>
        <strain>EC4115 / EHEC</strain>
    </source>
</reference>
<sequence>MAKTLYEKLFDAHVVYEAENETPLLYIDRHLVHEVTSPQAFDGLRAHGRPVRQPGKTFATMDHNVSTQTKDINACGEMARIQMQELIKNCKEFGVELYDLNHPYQGIVHVMGPEQGVTLPGMTIVCGDSHTATHGAFGALAFGIGTSEVEHVLATQTLKQGRAKTMKIEVQGKAAPGITAKDIVLAIIGKTGSAGGTGHVVEFCGEAIRDLSMEGRMTLCNMAIEMGAKAGLVAPDETTFNYVKGRLHAPKGKDFDDAVAYWKTLQTDEGATFDTVVTLQAEEISPQVTWGTNPGQVISVNDNIPDPASFADPVERASAEKALAYMGLKPGILLTEVAIDKVFIGSCTNSRIEDLRAAAEIAKGRKVAPGVQALVVPGSGPVKAQAEAEGLDKIFIEAGFEWRLPGCSMCLAMNNDRLNPGERCASTSNRNFEGRQGRGGRTHLVSPAMAAAAAVTGHFADIRNIK</sequence>
<organism>
    <name type="scientific">Escherichia coli O157:H7 (strain EC4115 / EHEC)</name>
    <dbReference type="NCBI Taxonomy" id="444450"/>
    <lineage>
        <taxon>Bacteria</taxon>
        <taxon>Pseudomonadati</taxon>
        <taxon>Pseudomonadota</taxon>
        <taxon>Gammaproteobacteria</taxon>
        <taxon>Enterobacterales</taxon>
        <taxon>Enterobacteriaceae</taxon>
        <taxon>Escherichia</taxon>
    </lineage>
</organism>
<keyword id="KW-0004">4Fe-4S</keyword>
<keyword id="KW-0028">Amino-acid biosynthesis</keyword>
<keyword id="KW-0100">Branched-chain amino acid biosynthesis</keyword>
<keyword id="KW-0408">Iron</keyword>
<keyword id="KW-0411">Iron-sulfur</keyword>
<keyword id="KW-0432">Leucine biosynthesis</keyword>
<keyword id="KW-0456">Lyase</keyword>
<keyword id="KW-0479">Metal-binding</keyword>
<proteinExistence type="inferred from homology"/>
<feature type="chain" id="PRO_1000135680" description="3-isopropylmalate dehydratase large subunit">
    <location>
        <begin position="1"/>
        <end position="466"/>
    </location>
</feature>
<feature type="binding site" evidence="1">
    <location>
        <position position="347"/>
    </location>
    <ligand>
        <name>[4Fe-4S] cluster</name>
        <dbReference type="ChEBI" id="CHEBI:49883"/>
    </ligand>
</feature>
<feature type="binding site" evidence="1">
    <location>
        <position position="407"/>
    </location>
    <ligand>
        <name>[4Fe-4S] cluster</name>
        <dbReference type="ChEBI" id="CHEBI:49883"/>
    </ligand>
</feature>
<feature type="binding site" evidence="1">
    <location>
        <position position="410"/>
    </location>
    <ligand>
        <name>[4Fe-4S] cluster</name>
        <dbReference type="ChEBI" id="CHEBI:49883"/>
    </ligand>
</feature>
<gene>
    <name evidence="1" type="primary">leuC</name>
    <name type="ordered locus">ECH74115_0079</name>
</gene>
<accession>B5YZA8</accession>
<name>LEUC_ECO5E</name>